<feature type="chain" id="PRO_0000365019" description="Putative sulfate transporter YvdB">
    <location>
        <begin position="1"/>
        <end position="530"/>
    </location>
</feature>
<feature type="transmembrane region" description="Helical" evidence="2">
    <location>
        <begin position="19"/>
        <end position="39"/>
    </location>
</feature>
<feature type="transmembrane region" description="Helical" evidence="2">
    <location>
        <begin position="41"/>
        <end position="61"/>
    </location>
</feature>
<feature type="transmembrane region" description="Helical" evidence="2">
    <location>
        <begin position="68"/>
        <end position="88"/>
    </location>
</feature>
<feature type="transmembrane region" description="Helical" evidence="2">
    <location>
        <begin position="91"/>
        <end position="111"/>
    </location>
</feature>
<feature type="transmembrane region" description="Helical" evidence="2">
    <location>
        <begin position="121"/>
        <end position="141"/>
    </location>
</feature>
<feature type="transmembrane region" description="Helical" evidence="2">
    <location>
        <begin position="164"/>
        <end position="184"/>
    </location>
</feature>
<feature type="transmembrane region" description="Helical" evidence="2">
    <location>
        <begin position="192"/>
        <end position="212"/>
    </location>
</feature>
<feature type="transmembrane region" description="Helical" evidence="2">
    <location>
        <begin position="241"/>
        <end position="261"/>
    </location>
</feature>
<feature type="transmembrane region" description="Helical" evidence="2">
    <location>
        <begin position="313"/>
        <end position="333"/>
    </location>
</feature>
<feature type="transmembrane region" description="Helical" evidence="2">
    <location>
        <begin position="384"/>
        <end position="404"/>
    </location>
</feature>
<feature type="domain" description="STAS" evidence="3">
    <location>
        <begin position="420"/>
        <end position="530"/>
    </location>
</feature>
<evidence type="ECO:0000250" key="1"/>
<evidence type="ECO:0000255" key="2"/>
<evidence type="ECO:0000255" key="3">
    <source>
        <dbReference type="PROSITE-ProRule" id="PRU00198"/>
    </source>
</evidence>
<evidence type="ECO:0000305" key="4"/>
<proteinExistence type="inferred from homology"/>
<protein>
    <recommendedName>
        <fullName>Putative sulfate transporter YvdB</fullName>
    </recommendedName>
</protein>
<name>YVDB_BACSU</name>
<sequence length="530" mass="57430">MRFSGRFKGYNLQKFQKDLIAGIVVGVVAIPLGMAFAIASGVEPEYGLYTVVIAGICISLFGGSKYQIGGPTGAFVPILFGIIMQYGLENLLIAGFMAGVMLVLFGLFKLGKIMKFVPKPVIVGFTAGIAVLIFTEQIANFLGLRNVEKHENFHHNMFEIVQQLGTFNVYAILTAVIGLVILLVSAKVMPKVPGALLALLISTVVAVVFFPDRMATIGSTYGEIPRHLPEFQFPELTLDKMVMLFPAALVIALLGGLESILSAMVADNMKGSKHDSNKELVGQGIANMAAPLFGGIPATGAIARTATNIKNGAVSPVSGVVHGVVVLLVLLVFAPYASHVPLASMAPILMVVAWNMSERKEVANMLRLKNADSFILAATFALTVLFDLIIGVATGLLLAFVFFIRRMSEATRIHNQETHPVLAKREDPSVSMYAIEGPLFFGSIDSLESSLLEHVQKKPKTLILLMNKVHYMDTSAEAVLGNIMNRIKRHNGKLMIVGLQSQPKELLHKTGLFHKIGKQHFFDHHDEITG</sequence>
<accession>O06984</accession>
<accession>Q795G5</accession>
<keyword id="KW-1003">Cell membrane</keyword>
<keyword id="KW-0472">Membrane</keyword>
<keyword id="KW-1185">Reference proteome</keyword>
<keyword id="KW-0812">Transmembrane</keyword>
<keyword id="KW-1133">Transmembrane helix</keyword>
<keyword id="KW-0813">Transport</keyword>
<comment type="subcellular location">
    <subcellularLocation>
        <location evidence="1">Cell membrane</location>
        <topology evidence="1">Multi-pass membrane protein</topology>
    </subcellularLocation>
</comment>
<comment type="similarity">
    <text evidence="4">Belongs to the SLC26A/SulP transporter (TC 2.A.53) family.</text>
</comment>
<gene>
    <name type="primary">yvdB</name>
    <name type="ordered locus">BSU34660</name>
</gene>
<organism>
    <name type="scientific">Bacillus subtilis (strain 168)</name>
    <dbReference type="NCBI Taxonomy" id="224308"/>
    <lineage>
        <taxon>Bacteria</taxon>
        <taxon>Bacillati</taxon>
        <taxon>Bacillota</taxon>
        <taxon>Bacilli</taxon>
        <taxon>Bacillales</taxon>
        <taxon>Bacillaceae</taxon>
        <taxon>Bacillus</taxon>
    </lineage>
</organism>
<dbReference type="EMBL" id="Z94043">
    <property type="protein sequence ID" value="CAB08068.1"/>
    <property type="molecule type" value="Genomic_DNA"/>
</dbReference>
<dbReference type="EMBL" id="AL009126">
    <property type="protein sequence ID" value="CAB15471.1"/>
    <property type="molecule type" value="Genomic_DNA"/>
</dbReference>
<dbReference type="PIR" id="B70033">
    <property type="entry name" value="B70033"/>
</dbReference>
<dbReference type="RefSeq" id="NP_391346.1">
    <property type="nucleotide sequence ID" value="NC_000964.3"/>
</dbReference>
<dbReference type="RefSeq" id="WP_003244488.1">
    <property type="nucleotide sequence ID" value="NZ_OZ025638.1"/>
</dbReference>
<dbReference type="SMR" id="O06984"/>
<dbReference type="FunCoup" id="O06984">
    <property type="interactions" value="320"/>
</dbReference>
<dbReference type="STRING" id="224308.BSU34660"/>
<dbReference type="PaxDb" id="224308-BSU34660"/>
<dbReference type="EnsemblBacteria" id="CAB15471">
    <property type="protein sequence ID" value="CAB15471"/>
    <property type="gene ID" value="BSU_34660"/>
</dbReference>
<dbReference type="GeneID" id="937217"/>
<dbReference type="KEGG" id="bsu:BSU34660"/>
<dbReference type="PATRIC" id="fig|224308.179.peg.3753"/>
<dbReference type="eggNOG" id="COG0659">
    <property type="taxonomic scope" value="Bacteria"/>
</dbReference>
<dbReference type="InParanoid" id="O06984"/>
<dbReference type="OrthoDB" id="9771198at2"/>
<dbReference type="PhylomeDB" id="O06984"/>
<dbReference type="BioCyc" id="BSUB:BSU34660-MONOMER"/>
<dbReference type="Proteomes" id="UP000001570">
    <property type="component" value="Chromosome"/>
</dbReference>
<dbReference type="GO" id="GO:0005886">
    <property type="term" value="C:plasma membrane"/>
    <property type="evidence" value="ECO:0000318"/>
    <property type="project" value="GO_Central"/>
</dbReference>
<dbReference type="GO" id="GO:0055085">
    <property type="term" value="P:transmembrane transport"/>
    <property type="evidence" value="ECO:0007669"/>
    <property type="project" value="InterPro"/>
</dbReference>
<dbReference type="CDD" id="cd07042">
    <property type="entry name" value="STAS_SulP_like_sulfate_transporter"/>
    <property type="match status" value="1"/>
</dbReference>
<dbReference type="FunFam" id="3.30.750.24:FF:000081">
    <property type="entry name" value="Sodium-independent anion transporter"/>
    <property type="match status" value="1"/>
</dbReference>
<dbReference type="Gene3D" id="3.30.750.24">
    <property type="entry name" value="STAS domain"/>
    <property type="match status" value="1"/>
</dbReference>
<dbReference type="InterPro" id="IPR011547">
    <property type="entry name" value="SLC26A/SulP_dom"/>
</dbReference>
<dbReference type="InterPro" id="IPR001902">
    <property type="entry name" value="SLC26A/SulP_fam"/>
</dbReference>
<dbReference type="InterPro" id="IPR002645">
    <property type="entry name" value="STAS_dom"/>
</dbReference>
<dbReference type="InterPro" id="IPR036513">
    <property type="entry name" value="STAS_dom_sf"/>
</dbReference>
<dbReference type="NCBIfam" id="TIGR00815">
    <property type="entry name" value="sulP"/>
    <property type="match status" value="1"/>
</dbReference>
<dbReference type="PANTHER" id="PTHR11814">
    <property type="entry name" value="SULFATE TRANSPORTER"/>
    <property type="match status" value="1"/>
</dbReference>
<dbReference type="Pfam" id="PF01740">
    <property type="entry name" value="STAS"/>
    <property type="match status" value="1"/>
</dbReference>
<dbReference type="Pfam" id="PF00916">
    <property type="entry name" value="Sulfate_transp"/>
    <property type="match status" value="1"/>
</dbReference>
<dbReference type="SUPFAM" id="SSF52091">
    <property type="entry name" value="SpoIIaa-like"/>
    <property type="match status" value="1"/>
</dbReference>
<dbReference type="PROSITE" id="PS50801">
    <property type="entry name" value="STAS"/>
    <property type="match status" value="1"/>
</dbReference>
<reference key="1">
    <citation type="submission" date="1997-04" db="EMBL/GenBank/DDBJ databases">
        <authorList>
            <person name="Denizot F."/>
        </authorList>
    </citation>
    <scope>NUCLEOTIDE SEQUENCE [GENOMIC DNA]</scope>
    <source>
        <strain>168</strain>
    </source>
</reference>
<reference key="2">
    <citation type="journal article" date="1997" name="Nature">
        <title>The complete genome sequence of the Gram-positive bacterium Bacillus subtilis.</title>
        <authorList>
            <person name="Kunst F."/>
            <person name="Ogasawara N."/>
            <person name="Moszer I."/>
            <person name="Albertini A.M."/>
            <person name="Alloni G."/>
            <person name="Azevedo V."/>
            <person name="Bertero M.G."/>
            <person name="Bessieres P."/>
            <person name="Bolotin A."/>
            <person name="Borchert S."/>
            <person name="Borriss R."/>
            <person name="Boursier L."/>
            <person name="Brans A."/>
            <person name="Braun M."/>
            <person name="Brignell S.C."/>
            <person name="Bron S."/>
            <person name="Brouillet S."/>
            <person name="Bruschi C.V."/>
            <person name="Caldwell B."/>
            <person name="Capuano V."/>
            <person name="Carter N.M."/>
            <person name="Choi S.-K."/>
            <person name="Codani J.-J."/>
            <person name="Connerton I.F."/>
            <person name="Cummings N.J."/>
            <person name="Daniel R.A."/>
            <person name="Denizot F."/>
            <person name="Devine K.M."/>
            <person name="Duesterhoeft A."/>
            <person name="Ehrlich S.D."/>
            <person name="Emmerson P.T."/>
            <person name="Entian K.-D."/>
            <person name="Errington J."/>
            <person name="Fabret C."/>
            <person name="Ferrari E."/>
            <person name="Foulger D."/>
            <person name="Fritz C."/>
            <person name="Fujita M."/>
            <person name="Fujita Y."/>
            <person name="Fuma S."/>
            <person name="Galizzi A."/>
            <person name="Galleron N."/>
            <person name="Ghim S.-Y."/>
            <person name="Glaser P."/>
            <person name="Goffeau A."/>
            <person name="Golightly E.J."/>
            <person name="Grandi G."/>
            <person name="Guiseppi G."/>
            <person name="Guy B.J."/>
            <person name="Haga K."/>
            <person name="Haiech J."/>
            <person name="Harwood C.R."/>
            <person name="Henaut A."/>
            <person name="Hilbert H."/>
            <person name="Holsappel S."/>
            <person name="Hosono S."/>
            <person name="Hullo M.-F."/>
            <person name="Itaya M."/>
            <person name="Jones L.-M."/>
            <person name="Joris B."/>
            <person name="Karamata D."/>
            <person name="Kasahara Y."/>
            <person name="Klaerr-Blanchard M."/>
            <person name="Klein C."/>
            <person name="Kobayashi Y."/>
            <person name="Koetter P."/>
            <person name="Koningstein G."/>
            <person name="Krogh S."/>
            <person name="Kumano M."/>
            <person name="Kurita K."/>
            <person name="Lapidus A."/>
            <person name="Lardinois S."/>
            <person name="Lauber J."/>
            <person name="Lazarevic V."/>
            <person name="Lee S.-M."/>
            <person name="Levine A."/>
            <person name="Liu H."/>
            <person name="Masuda S."/>
            <person name="Mauel C."/>
            <person name="Medigue C."/>
            <person name="Medina N."/>
            <person name="Mellado R.P."/>
            <person name="Mizuno M."/>
            <person name="Moestl D."/>
            <person name="Nakai S."/>
            <person name="Noback M."/>
            <person name="Noone D."/>
            <person name="O'Reilly M."/>
            <person name="Ogawa K."/>
            <person name="Ogiwara A."/>
            <person name="Oudega B."/>
            <person name="Park S.-H."/>
            <person name="Parro V."/>
            <person name="Pohl T.M."/>
            <person name="Portetelle D."/>
            <person name="Porwollik S."/>
            <person name="Prescott A.M."/>
            <person name="Presecan E."/>
            <person name="Pujic P."/>
            <person name="Purnelle B."/>
            <person name="Rapoport G."/>
            <person name="Rey M."/>
            <person name="Reynolds S."/>
            <person name="Rieger M."/>
            <person name="Rivolta C."/>
            <person name="Rocha E."/>
            <person name="Roche B."/>
            <person name="Rose M."/>
            <person name="Sadaie Y."/>
            <person name="Sato T."/>
            <person name="Scanlan E."/>
            <person name="Schleich S."/>
            <person name="Schroeter R."/>
            <person name="Scoffone F."/>
            <person name="Sekiguchi J."/>
            <person name="Sekowska A."/>
            <person name="Seror S.J."/>
            <person name="Serror P."/>
            <person name="Shin B.-S."/>
            <person name="Soldo B."/>
            <person name="Sorokin A."/>
            <person name="Tacconi E."/>
            <person name="Takagi T."/>
            <person name="Takahashi H."/>
            <person name="Takemaru K."/>
            <person name="Takeuchi M."/>
            <person name="Tamakoshi A."/>
            <person name="Tanaka T."/>
            <person name="Terpstra P."/>
            <person name="Tognoni A."/>
            <person name="Tosato V."/>
            <person name="Uchiyama S."/>
            <person name="Vandenbol M."/>
            <person name="Vannier F."/>
            <person name="Vassarotti A."/>
            <person name="Viari A."/>
            <person name="Wambutt R."/>
            <person name="Wedler E."/>
            <person name="Wedler H."/>
            <person name="Weitzenegger T."/>
            <person name="Winters P."/>
            <person name="Wipat A."/>
            <person name="Yamamoto H."/>
            <person name="Yamane K."/>
            <person name="Yasumoto K."/>
            <person name="Yata K."/>
            <person name="Yoshida K."/>
            <person name="Yoshikawa H.-F."/>
            <person name="Zumstein E."/>
            <person name="Yoshikawa H."/>
            <person name="Danchin A."/>
        </authorList>
    </citation>
    <scope>NUCLEOTIDE SEQUENCE [LARGE SCALE GENOMIC DNA]</scope>
    <source>
        <strain>168</strain>
    </source>
</reference>